<comment type="cofactor">
    <cofactor evidence="1">
        <name>Zn(2+)</name>
        <dbReference type="ChEBI" id="CHEBI:29105"/>
    </cofactor>
    <text evidence="1">Binds 1 zinc ion per subunit.</text>
</comment>
<comment type="subcellular location">
    <subcellularLocation>
        <location evidence="1">Cell inner membrane</location>
        <topology evidence="1">Multi-pass membrane protein</topology>
    </subcellularLocation>
</comment>
<comment type="similarity">
    <text evidence="1">Belongs to the peptidase M48B family.</text>
</comment>
<name>HTPX_HAEIE</name>
<protein>
    <recommendedName>
        <fullName evidence="1">Protease HtpX</fullName>
        <ecNumber evidence="1">3.4.24.-</ecNumber>
    </recommendedName>
    <alternativeName>
        <fullName evidence="1">Heat shock protein HtpX</fullName>
    </alternativeName>
</protein>
<evidence type="ECO:0000255" key="1">
    <source>
        <dbReference type="HAMAP-Rule" id="MF_00188"/>
    </source>
</evidence>
<sequence>MMRILLFLATNMAVMLVLGIILSVTGIAGNSTGGILIMALLFGFAGSLISLFLSKTMALRSVDGEVITQPRNQTERWLIDTVSRQAQKAGIPMPDVAIYHSPDVNAFATGATKSNSLVAVSTGLLNNMTEAEAEAVLAHEISHISNGDMVTMALLQGVLNTFVIFLSRVIATAVASSRNNNGEETRSSGIYFLVSMVLEMLFGVLASIIAMWFSRYREFRADAGSASLVGKEKMIMALQRLQQLHEHQNLEGSLNAFMINGKRSELFMSHPPLEKRIEALRNL</sequence>
<organism>
    <name type="scientific">Haemophilus influenzae (strain PittEE)</name>
    <dbReference type="NCBI Taxonomy" id="374930"/>
    <lineage>
        <taxon>Bacteria</taxon>
        <taxon>Pseudomonadati</taxon>
        <taxon>Pseudomonadota</taxon>
        <taxon>Gammaproteobacteria</taxon>
        <taxon>Pasteurellales</taxon>
        <taxon>Pasteurellaceae</taxon>
        <taxon>Haemophilus</taxon>
    </lineage>
</organism>
<dbReference type="EC" id="3.4.24.-" evidence="1"/>
<dbReference type="EMBL" id="CP000671">
    <property type="protein sequence ID" value="ABQ99006.1"/>
    <property type="molecule type" value="Genomic_DNA"/>
</dbReference>
<dbReference type="SMR" id="A5UE05"/>
<dbReference type="MEROPS" id="M48.002"/>
<dbReference type="KEGG" id="hip:CGSHiEE_08525"/>
<dbReference type="HOGENOM" id="CLU_042266_1_0_6"/>
<dbReference type="GO" id="GO:0005886">
    <property type="term" value="C:plasma membrane"/>
    <property type="evidence" value="ECO:0007669"/>
    <property type="project" value="UniProtKB-SubCell"/>
</dbReference>
<dbReference type="GO" id="GO:0004222">
    <property type="term" value="F:metalloendopeptidase activity"/>
    <property type="evidence" value="ECO:0007669"/>
    <property type="project" value="UniProtKB-UniRule"/>
</dbReference>
<dbReference type="GO" id="GO:0008270">
    <property type="term" value="F:zinc ion binding"/>
    <property type="evidence" value="ECO:0007669"/>
    <property type="project" value="UniProtKB-UniRule"/>
</dbReference>
<dbReference type="GO" id="GO:0006508">
    <property type="term" value="P:proteolysis"/>
    <property type="evidence" value="ECO:0007669"/>
    <property type="project" value="UniProtKB-KW"/>
</dbReference>
<dbReference type="CDD" id="cd07335">
    <property type="entry name" value="M48B_HtpX_like"/>
    <property type="match status" value="1"/>
</dbReference>
<dbReference type="FunFam" id="3.30.2010.10:FF:000001">
    <property type="entry name" value="Protease HtpX"/>
    <property type="match status" value="1"/>
</dbReference>
<dbReference type="Gene3D" id="3.30.2010.10">
    <property type="entry name" value="Metalloproteases ('zincins'), catalytic domain"/>
    <property type="match status" value="1"/>
</dbReference>
<dbReference type="HAMAP" id="MF_00188">
    <property type="entry name" value="Pept_M48_protease_HtpX"/>
    <property type="match status" value="1"/>
</dbReference>
<dbReference type="InterPro" id="IPR050083">
    <property type="entry name" value="HtpX_protease"/>
</dbReference>
<dbReference type="InterPro" id="IPR022919">
    <property type="entry name" value="Pept_M48_protease_HtpX"/>
</dbReference>
<dbReference type="InterPro" id="IPR001915">
    <property type="entry name" value="Peptidase_M48"/>
</dbReference>
<dbReference type="NCBIfam" id="NF003965">
    <property type="entry name" value="PRK05457.1"/>
    <property type="match status" value="1"/>
</dbReference>
<dbReference type="PANTHER" id="PTHR43221">
    <property type="entry name" value="PROTEASE HTPX"/>
    <property type="match status" value="1"/>
</dbReference>
<dbReference type="PANTHER" id="PTHR43221:SF1">
    <property type="entry name" value="PROTEASE HTPX"/>
    <property type="match status" value="1"/>
</dbReference>
<dbReference type="Pfam" id="PF01435">
    <property type="entry name" value="Peptidase_M48"/>
    <property type="match status" value="1"/>
</dbReference>
<dbReference type="PROSITE" id="PS00142">
    <property type="entry name" value="ZINC_PROTEASE"/>
    <property type="match status" value="1"/>
</dbReference>
<gene>
    <name evidence="1" type="primary">htpX</name>
    <name type="ordered locus">CGSHiEE_08525</name>
</gene>
<accession>A5UE05</accession>
<reference key="1">
    <citation type="journal article" date="2007" name="Genome Biol.">
        <title>Characterization and modeling of the Haemophilus influenzae core and supragenomes based on the complete genomic sequences of Rd and 12 clinical nontypeable strains.</title>
        <authorList>
            <person name="Hogg J.S."/>
            <person name="Hu F.Z."/>
            <person name="Janto B."/>
            <person name="Boissy R."/>
            <person name="Hayes J."/>
            <person name="Keefe R."/>
            <person name="Post J.C."/>
            <person name="Ehrlich G.D."/>
        </authorList>
    </citation>
    <scope>NUCLEOTIDE SEQUENCE [LARGE SCALE GENOMIC DNA]</scope>
    <source>
        <strain>PittEE</strain>
    </source>
</reference>
<proteinExistence type="inferred from homology"/>
<feature type="chain" id="PRO_1000020868" description="Protease HtpX">
    <location>
        <begin position="1"/>
        <end position="283"/>
    </location>
</feature>
<feature type="transmembrane region" description="Helical" evidence="1">
    <location>
        <begin position="4"/>
        <end position="24"/>
    </location>
</feature>
<feature type="transmembrane region" description="Helical" evidence="1">
    <location>
        <begin position="33"/>
        <end position="53"/>
    </location>
</feature>
<feature type="transmembrane region" description="Helical" evidence="1">
    <location>
        <begin position="147"/>
        <end position="167"/>
    </location>
</feature>
<feature type="transmembrane region" description="Helical" evidence="1">
    <location>
        <begin position="190"/>
        <end position="210"/>
    </location>
</feature>
<feature type="active site" evidence="1">
    <location>
        <position position="140"/>
    </location>
</feature>
<feature type="binding site" evidence="1">
    <location>
        <position position="139"/>
    </location>
    <ligand>
        <name>Zn(2+)</name>
        <dbReference type="ChEBI" id="CHEBI:29105"/>
        <note>catalytic</note>
    </ligand>
</feature>
<feature type="binding site" evidence="1">
    <location>
        <position position="143"/>
    </location>
    <ligand>
        <name>Zn(2+)</name>
        <dbReference type="ChEBI" id="CHEBI:29105"/>
        <note>catalytic</note>
    </ligand>
</feature>
<feature type="binding site" evidence="1">
    <location>
        <position position="218"/>
    </location>
    <ligand>
        <name>Zn(2+)</name>
        <dbReference type="ChEBI" id="CHEBI:29105"/>
        <note>catalytic</note>
    </ligand>
</feature>
<keyword id="KW-0997">Cell inner membrane</keyword>
<keyword id="KW-1003">Cell membrane</keyword>
<keyword id="KW-0378">Hydrolase</keyword>
<keyword id="KW-0472">Membrane</keyword>
<keyword id="KW-0479">Metal-binding</keyword>
<keyword id="KW-0482">Metalloprotease</keyword>
<keyword id="KW-0645">Protease</keyword>
<keyword id="KW-0346">Stress response</keyword>
<keyword id="KW-0812">Transmembrane</keyword>
<keyword id="KW-1133">Transmembrane helix</keyword>
<keyword id="KW-0862">Zinc</keyword>